<sequence>MYSTSLLRWLVVALVSAVPLVTAYGFVPYPQNDAFYYPPDGWQNTERGDILKDRKIQAATLGILKWNLDAWQVLYRTSGARPNTPSYTVTTVLVPYNAKRDHVVTIASPENSNFIQCAPSYAFRHTGVLEIANFEPRWEQMLYTLFLAEGWVVNAPDHEGPESAFSAGRLGGHMMLDSMRALQKYGPLNIPDNAMHIGHGYSGGSTPTGWAASLLERYAPELNVVGWSMGGSMTDPLYTLDSLDGNPTSSLVLAGALGIVDAYRDEVGNYLHDNVLTDEGKIAEKVMRNSCVYEAVIRYFGATFQSERYMKDGRKLSSFPELTHLTDMNTMGRYPQYTPKKPFRMFHALHDEEIAWHQANKTAVEWCNNGANVNFITFSSNDLVHVTTYLWNLPYLVQYMRDRFSNKDFYGGNCQFDVEPNNPLFDTSILGERFKELLEAVLDILGKKIGPKDSIILNMIKSGKNPNKGGVWNDVLKSTTVSPGEGGNKSPESKKATKKYKSESKAEKKQPDSIPSSSSKSSSDNKSAHAKYHAHGHGHGHASSNSNNGHSHSAKESSTSKGSSRRHVARFM</sequence>
<reference key="1">
    <citation type="journal article" date="2007" name="Proc. Natl. Acad. Sci. U.S.A.">
        <title>Dandruff-associated Malassezia genomes reveal convergent and divergent virulence traits shared with plant and human fungal pathogens.</title>
        <authorList>
            <person name="Xu J."/>
            <person name="Saunders C.W."/>
            <person name="Hu P."/>
            <person name="Grant R.A."/>
            <person name="Boekhout T."/>
            <person name="Kuramae E.E."/>
            <person name="Kronstad J.W."/>
            <person name="DeAngelis Y.M."/>
            <person name="Reeder N.L."/>
            <person name="Johnstone K.R."/>
            <person name="Leland M."/>
            <person name="Fieno A.M."/>
            <person name="Begley W.M."/>
            <person name="Sun Y."/>
            <person name="Lacey M.P."/>
            <person name="Chaudhary T."/>
            <person name="Keough T."/>
            <person name="Chu L."/>
            <person name="Sears R."/>
            <person name="Yuan B."/>
            <person name="Dawson T.L. Jr."/>
        </authorList>
    </citation>
    <scope>NUCLEOTIDE SEQUENCE [LARGE SCALE GENOMIC DNA]</scope>
    <scope>IDENTIFICATION</scope>
    <scope>FUNCTION</scope>
    <scope>SUBCELLULAR LOCATION</scope>
    <source>
        <strain>ATCC MYA-4612 / CBS 7966</strain>
    </source>
</reference>
<reference key="2">
    <citation type="journal article" date="2016" name="Microbiology">
        <title>Secreted lipases from Malassezia globosa: recombinant expression and determination of their substrate specificities.</title>
        <authorList>
            <person name="Sommer B."/>
            <person name="Overy D.P."/>
            <person name="Haltli B."/>
            <person name="Kerr R.G."/>
        </authorList>
    </citation>
    <scope>FUNCTION</scope>
    <scope>CATALYTIC ACTIVITY</scope>
    <scope>SUBSTRATE SPECIFICITY</scope>
</reference>
<organism>
    <name type="scientific">Malassezia globosa (strain ATCC MYA-4612 / CBS 7966)</name>
    <name type="common">Dandruff-associated fungus</name>
    <dbReference type="NCBI Taxonomy" id="425265"/>
    <lineage>
        <taxon>Eukaryota</taxon>
        <taxon>Fungi</taxon>
        <taxon>Dikarya</taxon>
        <taxon>Basidiomycota</taxon>
        <taxon>Ustilaginomycotina</taxon>
        <taxon>Malasseziomycetes</taxon>
        <taxon>Malasseziales</taxon>
        <taxon>Malasseziaceae</taxon>
        <taxon>Malassezia</taxon>
    </lineage>
</organism>
<dbReference type="EC" id="3.1.1.-" evidence="6"/>
<dbReference type="EC" id="3.1.1.3" evidence="6"/>
<dbReference type="EMBL" id="AAYY01000013">
    <property type="protein sequence ID" value="EDP42258.1"/>
    <property type="molecule type" value="Genomic_DNA"/>
</dbReference>
<dbReference type="RefSeq" id="XP_001729472.1">
    <property type="nucleotide sequence ID" value="XM_001729420.1"/>
</dbReference>
<dbReference type="SMR" id="A8Q9M3"/>
<dbReference type="STRING" id="425265.A8Q9M3"/>
<dbReference type="ESTHER" id="malgo-a8q9m3">
    <property type="family name" value="Fungal-Bact_LIP"/>
</dbReference>
<dbReference type="GeneID" id="5853779"/>
<dbReference type="KEGG" id="mgl:MGL_3507"/>
<dbReference type="VEuPathDB" id="FungiDB:MGL_3507"/>
<dbReference type="InParanoid" id="A8Q9M3"/>
<dbReference type="OMA" id="NAPDHEG"/>
<dbReference type="OrthoDB" id="2373480at2759"/>
<dbReference type="Proteomes" id="UP000008837">
    <property type="component" value="Unassembled WGS sequence"/>
</dbReference>
<dbReference type="GO" id="GO:0005576">
    <property type="term" value="C:extracellular region"/>
    <property type="evidence" value="ECO:0007669"/>
    <property type="project" value="UniProtKB-SubCell"/>
</dbReference>
<dbReference type="GO" id="GO:0004806">
    <property type="term" value="F:triacylglycerol lipase activity"/>
    <property type="evidence" value="ECO:0007669"/>
    <property type="project" value="InterPro"/>
</dbReference>
<dbReference type="GO" id="GO:0016042">
    <property type="term" value="P:lipid catabolic process"/>
    <property type="evidence" value="ECO:0007669"/>
    <property type="project" value="UniProtKB-KW"/>
</dbReference>
<dbReference type="Gene3D" id="1.10.260.130">
    <property type="match status" value="1"/>
</dbReference>
<dbReference type="Gene3D" id="3.40.50.1820">
    <property type="entry name" value="alpha/beta hydrolase"/>
    <property type="match status" value="1"/>
</dbReference>
<dbReference type="InterPro" id="IPR029058">
    <property type="entry name" value="AB_hydrolase_fold"/>
</dbReference>
<dbReference type="InterPro" id="IPR005152">
    <property type="entry name" value="Lipase_secreted"/>
</dbReference>
<dbReference type="PANTHER" id="PTHR34853">
    <property type="match status" value="1"/>
</dbReference>
<dbReference type="PANTHER" id="PTHR34853:SF1">
    <property type="entry name" value="LIPASE 5"/>
    <property type="match status" value="1"/>
</dbReference>
<dbReference type="Pfam" id="PF03583">
    <property type="entry name" value="LIP"/>
    <property type="match status" value="1"/>
</dbReference>
<dbReference type="SUPFAM" id="SSF53474">
    <property type="entry name" value="alpha/beta-Hydrolases"/>
    <property type="match status" value="1"/>
</dbReference>
<keyword id="KW-0134">Cell wall</keyword>
<keyword id="KW-1015">Disulfide bond</keyword>
<keyword id="KW-0325">Glycoprotein</keyword>
<keyword id="KW-0378">Hydrolase</keyword>
<keyword id="KW-0442">Lipid degradation</keyword>
<keyword id="KW-0443">Lipid metabolism</keyword>
<keyword id="KW-1185">Reference proteome</keyword>
<keyword id="KW-0964">Secreted</keyword>
<keyword id="KW-0732">Signal</keyword>
<keyword id="KW-0843">Virulence</keyword>
<evidence type="ECO:0000250" key="1">
    <source>
        <dbReference type="UniProtKB" id="W3VKA4"/>
    </source>
</evidence>
<evidence type="ECO:0000255" key="2"/>
<evidence type="ECO:0000255" key="3">
    <source>
        <dbReference type="PROSITE-ProRule" id="PRU00498"/>
    </source>
</evidence>
<evidence type="ECO:0000256" key="4">
    <source>
        <dbReference type="SAM" id="MobiDB-lite"/>
    </source>
</evidence>
<evidence type="ECO:0000269" key="5">
    <source>
    </source>
</evidence>
<evidence type="ECO:0000269" key="6">
    <source>
    </source>
</evidence>
<evidence type="ECO:0000303" key="7">
    <source>
    </source>
</evidence>
<evidence type="ECO:0000305" key="8"/>
<evidence type="ECO:0000305" key="9">
    <source>
    </source>
</evidence>
<accession>A8Q9M3</accession>
<proteinExistence type="evidence at protein level"/>
<comment type="function">
    <text evidence="5 6">Secreted lipase involved in Dandruff and seborrheic dermatitis (D/SD) probably via lipase-mediated breakdown of sebaceous lipids and release of irritating free fatty acids (PubMed:18000048). Shows only minimal activity against triolein (PubMed:27130210). Mostly converts monoolein to di- and triolein, while free fatty acids are only produced in low amounts (PubMed:27130210).</text>
</comment>
<comment type="catalytic activity">
    <reaction evidence="6">
        <text>a triacylglycerol + H2O = a diacylglycerol + a fatty acid + H(+)</text>
        <dbReference type="Rhea" id="RHEA:12044"/>
        <dbReference type="ChEBI" id="CHEBI:15377"/>
        <dbReference type="ChEBI" id="CHEBI:15378"/>
        <dbReference type="ChEBI" id="CHEBI:17855"/>
        <dbReference type="ChEBI" id="CHEBI:18035"/>
        <dbReference type="ChEBI" id="CHEBI:28868"/>
        <dbReference type="EC" id="3.1.1.3"/>
    </reaction>
</comment>
<comment type="catalytic activity">
    <reaction evidence="6">
        <text>a monoacylglycerol + H2O = glycerol + a fatty acid + H(+)</text>
        <dbReference type="Rhea" id="RHEA:15245"/>
        <dbReference type="ChEBI" id="CHEBI:15377"/>
        <dbReference type="ChEBI" id="CHEBI:15378"/>
        <dbReference type="ChEBI" id="CHEBI:17408"/>
        <dbReference type="ChEBI" id="CHEBI:17754"/>
        <dbReference type="ChEBI" id="CHEBI:28868"/>
    </reaction>
</comment>
<comment type="catalytic activity">
    <reaction evidence="6">
        <text>a diacylglycerol + H2O = a monoacylglycerol + a fatty acid + H(+)</text>
        <dbReference type="Rhea" id="RHEA:32731"/>
        <dbReference type="ChEBI" id="CHEBI:15377"/>
        <dbReference type="ChEBI" id="CHEBI:15378"/>
        <dbReference type="ChEBI" id="CHEBI:17408"/>
        <dbReference type="ChEBI" id="CHEBI:18035"/>
        <dbReference type="ChEBI" id="CHEBI:28868"/>
    </reaction>
</comment>
<comment type="subcellular location">
    <subcellularLocation>
        <location evidence="5">Secreted</location>
    </subcellularLocation>
    <subcellularLocation>
        <location evidence="5">Secreted</location>
        <location evidence="5">Cell wall</location>
    </subcellularLocation>
</comment>
<comment type="similarity">
    <text evidence="8">Belongs to the AB hydrolase superfamily. Lipase family. Class Lip subfamily.</text>
</comment>
<feature type="signal peptide" evidence="2">
    <location>
        <begin position="1"/>
        <end position="23"/>
    </location>
</feature>
<feature type="chain" id="PRO_5002725520" description="Secreted triacylglycerol lipase LIP6">
    <location>
        <begin position="24"/>
        <end position="572"/>
    </location>
</feature>
<feature type="region of interest" description="Disordered" evidence="4">
    <location>
        <begin position="468"/>
        <end position="572"/>
    </location>
</feature>
<feature type="compositionally biased region" description="Basic and acidic residues" evidence="4">
    <location>
        <begin position="491"/>
        <end position="511"/>
    </location>
</feature>
<feature type="compositionally biased region" description="Low complexity" evidence="4">
    <location>
        <begin position="512"/>
        <end position="525"/>
    </location>
</feature>
<feature type="compositionally biased region" description="Basic residues" evidence="4">
    <location>
        <begin position="528"/>
        <end position="540"/>
    </location>
</feature>
<feature type="compositionally biased region" description="Low complexity" evidence="4">
    <location>
        <begin position="541"/>
        <end position="562"/>
    </location>
</feature>
<feature type="compositionally biased region" description="Basic residues" evidence="4">
    <location>
        <begin position="563"/>
        <end position="572"/>
    </location>
</feature>
<feature type="active site" description="Nucleophile" evidence="9">
    <location>
        <position position="202"/>
    </location>
</feature>
<feature type="active site" evidence="9">
    <location>
        <position position="351"/>
    </location>
</feature>
<feature type="active site" evidence="9">
    <location>
        <position position="385"/>
    </location>
</feature>
<feature type="glycosylation site" description="N-linked (GlcNAc...) asparagine" evidence="3">
    <location>
        <position position="360"/>
    </location>
</feature>
<feature type="glycosylation site" description="N-linked (GlcNAc...) asparagine" evidence="3">
    <location>
        <position position="525"/>
    </location>
</feature>
<feature type="disulfide bond" evidence="1">
    <location>
        <begin position="117"/>
        <end position="291"/>
    </location>
</feature>
<gene>
    <name evidence="7" type="primary">LIP6</name>
    <name type="ORF">MGL_3507</name>
</gene>
<name>LIP6_MALGO</name>
<protein>
    <recommendedName>
        <fullName evidence="7">Secreted triacylglycerol lipase LIP6</fullName>
        <ecNumber evidence="6">3.1.1.-</ecNumber>
        <ecNumber evidence="6">3.1.1.3</ecNumber>
    </recommendedName>
</protein>